<keyword id="KW-0963">Cytoplasm</keyword>
<keyword id="KW-0489">Methyltransferase</keyword>
<keyword id="KW-1185">Reference proteome</keyword>
<keyword id="KW-0949">S-adenosyl-L-methionine</keyword>
<keyword id="KW-0808">Transferase</keyword>
<name>PRMA_ALLAM</name>
<feature type="chain" id="PRO_1000192571" description="Ribosomal protein L11 methyltransferase">
    <location>
        <begin position="1"/>
        <end position="290"/>
    </location>
</feature>
<feature type="binding site" evidence="1">
    <location>
        <position position="136"/>
    </location>
    <ligand>
        <name>S-adenosyl-L-methionine</name>
        <dbReference type="ChEBI" id="CHEBI:59789"/>
    </ligand>
</feature>
<feature type="binding site" evidence="1">
    <location>
        <position position="159"/>
    </location>
    <ligand>
        <name>S-adenosyl-L-methionine</name>
        <dbReference type="ChEBI" id="CHEBI:59789"/>
    </ligand>
</feature>
<feature type="binding site" evidence="1">
    <location>
        <position position="181"/>
    </location>
    <ligand>
        <name>S-adenosyl-L-methionine</name>
        <dbReference type="ChEBI" id="CHEBI:59789"/>
    </ligand>
</feature>
<feature type="binding site" evidence="1">
    <location>
        <position position="228"/>
    </location>
    <ligand>
        <name>S-adenosyl-L-methionine</name>
        <dbReference type="ChEBI" id="CHEBI:59789"/>
    </ligand>
</feature>
<gene>
    <name evidence="1" type="primary">prmA</name>
    <name type="ordered locus">Avi_2857</name>
</gene>
<protein>
    <recommendedName>
        <fullName evidence="1">Ribosomal protein L11 methyltransferase</fullName>
        <shortName evidence="1">L11 Mtase</shortName>
        <ecNumber evidence="1">2.1.1.-</ecNumber>
    </recommendedName>
</protein>
<organism>
    <name type="scientific">Allorhizobium ampelinum (strain ATCC BAA-846 / DSM 112012 / S4)</name>
    <name type="common">Agrobacterium vitis (strain S4)</name>
    <dbReference type="NCBI Taxonomy" id="311402"/>
    <lineage>
        <taxon>Bacteria</taxon>
        <taxon>Pseudomonadati</taxon>
        <taxon>Pseudomonadota</taxon>
        <taxon>Alphaproteobacteria</taxon>
        <taxon>Hyphomicrobiales</taxon>
        <taxon>Rhizobiaceae</taxon>
        <taxon>Rhizobium/Agrobacterium group</taxon>
        <taxon>Allorhizobium</taxon>
        <taxon>Allorhizobium ampelinum</taxon>
    </lineage>
</organism>
<comment type="function">
    <text evidence="1">Methylates ribosomal protein L11.</text>
</comment>
<comment type="catalytic activity">
    <reaction evidence="1">
        <text>L-lysyl-[protein] + 3 S-adenosyl-L-methionine = N(6),N(6),N(6)-trimethyl-L-lysyl-[protein] + 3 S-adenosyl-L-homocysteine + 3 H(+)</text>
        <dbReference type="Rhea" id="RHEA:54192"/>
        <dbReference type="Rhea" id="RHEA-COMP:9752"/>
        <dbReference type="Rhea" id="RHEA-COMP:13826"/>
        <dbReference type="ChEBI" id="CHEBI:15378"/>
        <dbReference type="ChEBI" id="CHEBI:29969"/>
        <dbReference type="ChEBI" id="CHEBI:57856"/>
        <dbReference type="ChEBI" id="CHEBI:59789"/>
        <dbReference type="ChEBI" id="CHEBI:61961"/>
    </reaction>
</comment>
<comment type="subcellular location">
    <subcellularLocation>
        <location evidence="1">Cytoplasm</location>
    </subcellularLocation>
</comment>
<comment type="similarity">
    <text evidence="1">Belongs to the methyltransferase superfamily. PrmA family.</text>
</comment>
<accession>B9JXT0</accession>
<dbReference type="EC" id="2.1.1.-" evidence="1"/>
<dbReference type="EMBL" id="CP000633">
    <property type="protein sequence ID" value="ACM37057.1"/>
    <property type="molecule type" value="Genomic_DNA"/>
</dbReference>
<dbReference type="RefSeq" id="WP_015916478.1">
    <property type="nucleotide sequence ID" value="NC_011989.1"/>
</dbReference>
<dbReference type="SMR" id="B9JXT0"/>
<dbReference type="STRING" id="311402.Avi_2857"/>
<dbReference type="KEGG" id="avi:Avi_2857"/>
<dbReference type="eggNOG" id="COG2264">
    <property type="taxonomic scope" value="Bacteria"/>
</dbReference>
<dbReference type="HOGENOM" id="CLU_049382_3_0_5"/>
<dbReference type="Proteomes" id="UP000001596">
    <property type="component" value="Chromosome 1"/>
</dbReference>
<dbReference type="GO" id="GO:0005737">
    <property type="term" value="C:cytoplasm"/>
    <property type="evidence" value="ECO:0007669"/>
    <property type="project" value="UniProtKB-SubCell"/>
</dbReference>
<dbReference type="GO" id="GO:0016279">
    <property type="term" value="F:protein-lysine N-methyltransferase activity"/>
    <property type="evidence" value="ECO:0007669"/>
    <property type="project" value="RHEA"/>
</dbReference>
<dbReference type="GO" id="GO:0032259">
    <property type="term" value="P:methylation"/>
    <property type="evidence" value="ECO:0007669"/>
    <property type="project" value="UniProtKB-KW"/>
</dbReference>
<dbReference type="CDD" id="cd02440">
    <property type="entry name" value="AdoMet_MTases"/>
    <property type="match status" value="1"/>
</dbReference>
<dbReference type="Gene3D" id="3.40.50.150">
    <property type="entry name" value="Vaccinia Virus protein VP39"/>
    <property type="match status" value="1"/>
</dbReference>
<dbReference type="HAMAP" id="MF_00735">
    <property type="entry name" value="Methyltr_PrmA"/>
    <property type="match status" value="1"/>
</dbReference>
<dbReference type="InterPro" id="IPR050078">
    <property type="entry name" value="Ribosomal_L11_MeTrfase_PrmA"/>
</dbReference>
<dbReference type="InterPro" id="IPR004498">
    <property type="entry name" value="Ribosomal_PrmA_MeTrfase"/>
</dbReference>
<dbReference type="InterPro" id="IPR029063">
    <property type="entry name" value="SAM-dependent_MTases_sf"/>
</dbReference>
<dbReference type="NCBIfam" id="NF001784">
    <property type="entry name" value="PRK00517.2-1"/>
    <property type="match status" value="1"/>
</dbReference>
<dbReference type="PANTHER" id="PTHR43648">
    <property type="entry name" value="ELECTRON TRANSFER FLAVOPROTEIN BETA SUBUNIT LYSINE METHYLTRANSFERASE"/>
    <property type="match status" value="1"/>
</dbReference>
<dbReference type="PANTHER" id="PTHR43648:SF1">
    <property type="entry name" value="ELECTRON TRANSFER FLAVOPROTEIN BETA SUBUNIT LYSINE METHYLTRANSFERASE"/>
    <property type="match status" value="1"/>
</dbReference>
<dbReference type="Pfam" id="PF06325">
    <property type="entry name" value="PrmA"/>
    <property type="match status" value="1"/>
</dbReference>
<dbReference type="SUPFAM" id="SSF53335">
    <property type="entry name" value="S-adenosyl-L-methionine-dependent methyltransferases"/>
    <property type="match status" value="1"/>
</dbReference>
<proteinExistence type="inferred from homology"/>
<evidence type="ECO:0000255" key="1">
    <source>
        <dbReference type="HAMAP-Rule" id="MF_00735"/>
    </source>
</evidence>
<reference key="1">
    <citation type="journal article" date="2009" name="J. Bacteriol.">
        <title>Genome sequences of three Agrobacterium biovars help elucidate the evolution of multichromosome genomes in bacteria.</title>
        <authorList>
            <person name="Slater S.C."/>
            <person name="Goldman B.S."/>
            <person name="Goodner B."/>
            <person name="Setubal J.C."/>
            <person name="Farrand S.K."/>
            <person name="Nester E.W."/>
            <person name="Burr T.J."/>
            <person name="Banta L."/>
            <person name="Dickerman A.W."/>
            <person name="Paulsen I."/>
            <person name="Otten L."/>
            <person name="Suen G."/>
            <person name="Welch R."/>
            <person name="Almeida N.F."/>
            <person name="Arnold F."/>
            <person name="Burton O.T."/>
            <person name="Du Z."/>
            <person name="Ewing A."/>
            <person name="Godsy E."/>
            <person name="Heisel S."/>
            <person name="Houmiel K.L."/>
            <person name="Jhaveri J."/>
            <person name="Lu J."/>
            <person name="Miller N.M."/>
            <person name="Norton S."/>
            <person name="Chen Q."/>
            <person name="Phoolcharoen W."/>
            <person name="Ohlin V."/>
            <person name="Ondrusek D."/>
            <person name="Pride N."/>
            <person name="Stricklin S.L."/>
            <person name="Sun J."/>
            <person name="Wheeler C."/>
            <person name="Wilson L."/>
            <person name="Zhu H."/>
            <person name="Wood D.W."/>
        </authorList>
    </citation>
    <scope>NUCLEOTIDE SEQUENCE [LARGE SCALE GENOMIC DNA]</scope>
    <source>
        <strain>ATCC BAA-846 / DSM 112012 / S4</strain>
    </source>
</reference>
<sequence>MSELRFFTSTTEVQANHILDLLSLEFGEEDYAIATTEVDEKRDIWETSIYLMFDEEDDILARVNAALVTEFPDLPVEREVIPDIDWIAKSLEGLTPVRAGRFLVHGSHDRDKVRPHDLAIEIDAGQAFGTGHHGTTAGCLEMIDSVVRARRPRNALDLGTGSGVLAIAVRKLVNVPVLATDIDPIAVRVAKENGTRNGVPNGIEWRTAPGFHSTAFGEFGPFDLIIANILARPLMKMAPQLVTHLAPGGSVILSGILASQRWKVIAAYNGAGVKHVRTIWRNGWVTIHLQ</sequence>